<comment type="function">
    <text>May play a role in plant defense. Probably has no oxalate oxidase activity even if the active site is conserved.</text>
</comment>
<comment type="subunit">
    <text evidence="1">Oligomer (believed to be a pentamer but probably hexamer).</text>
</comment>
<comment type="subcellular location">
    <subcellularLocation>
        <location evidence="1">Secreted</location>
        <location evidence="1">Extracellular space</location>
        <location evidence="1">Apoplast</location>
    </subcellularLocation>
</comment>
<comment type="similarity">
    <text evidence="3">Belongs to the germin family.</text>
</comment>
<reference key="1">
    <citation type="journal article" date="2005" name="Genome Res.">
        <title>Sequence, annotation, and analysis of synteny between rice chromosome 3 and diverged grass species.</title>
        <authorList>
            <consortium name="The rice chromosome 3 sequencing consortium"/>
            <person name="Buell C.R."/>
            <person name="Yuan Q."/>
            <person name="Ouyang S."/>
            <person name="Liu J."/>
            <person name="Zhu W."/>
            <person name="Wang A."/>
            <person name="Maiti R."/>
            <person name="Haas B."/>
            <person name="Wortman J."/>
            <person name="Pertea M."/>
            <person name="Jones K.M."/>
            <person name="Kim M."/>
            <person name="Overton L."/>
            <person name="Tsitrin T."/>
            <person name="Fadrosh D."/>
            <person name="Bera J."/>
            <person name="Weaver B."/>
            <person name="Jin S."/>
            <person name="Johri S."/>
            <person name="Reardon M."/>
            <person name="Webb K."/>
            <person name="Hill J."/>
            <person name="Moffat K."/>
            <person name="Tallon L."/>
            <person name="Van Aken S."/>
            <person name="Lewis M."/>
            <person name="Utterback T."/>
            <person name="Feldblyum T."/>
            <person name="Zismann V."/>
            <person name="Iobst S."/>
            <person name="Hsiao J."/>
            <person name="de Vazeille A.R."/>
            <person name="Salzberg S.L."/>
            <person name="White O."/>
            <person name="Fraser C.M."/>
            <person name="Yu Y."/>
            <person name="Kim H."/>
            <person name="Rambo T."/>
            <person name="Currie J."/>
            <person name="Collura K."/>
            <person name="Kernodle-Thompson S."/>
            <person name="Wei F."/>
            <person name="Kudrna K."/>
            <person name="Ammiraju J.S.S."/>
            <person name="Luo M."/>
            <person name="Goicoechea J.L."/>
            <person name="Wing R.A."/>
            <person name="Henry D."/>
            <person name="Oates R."/>
            <person name="Palmer M."/>
            <person name="Pries G."/>
            <person name="Saski C."/>
            <person name="Simmons J."/>
            <person name="Soderlund C."/>
            <person name="Nelson W."/>
            <person name="de la Bastide M."/>
            <person name="Spiegel L."/>
            <person name="Nascimento L."/>
            <person name="Huang E."/>
            <person name="Preston R."/>
            <person name="Zutavern T."/>
            <person name="Palmer L."/>
            <person name="O'Shaughnessy A."/>
            <person name="Dike S."/>
            <person name="McCombie W.R."/>
            <person name="Minx P."/>
            <person name="Cordum H."/>
            <person name="Wilson R."/>
            <person name="Jin W."/>
            <person name="Lee H.R."/>
            <person name="Jiang J."/>
            <person name="Jackson S."/>
        </authorList>
    </citation>
    <scope>NUCLEOTIDE SEQUENCE [LARGE SCALE GENOMIC DNA]</scope>
    <source>
        <strain>cv. Nipponbare</strain>
    </source>
</reference>
<reference key="2">
    <citation type="journal article" date="2005" name="Nature">
        <title>The map-based sequence of the rice genome.</title>
        <authorList>
            <consortium name="International rice genome sequencing project (IRGSP)"/>
        </authorList>
    </citation>
    <scope>NUCLEOTIDE SEQUENCE [LARGE SCALE GENOMIC DNA]</scope>
    <source>
        <strain>cv. Nipponbare</strain>
    </source>
</reference>
<reference key="3">
    <citation type="journal article" date="2008" name="Nucleic Acids Res.">
        <title>The rice annotation project database (RAP-DB): 2008 update.</title>
        <authorList>
            <consortium name="The rice annotation project (RAP)"/>
        </authorList>
    </citation>
    <scope>GENOME REANNOTATION</scope>
    <source>
        <strain>cv. Nipponbare</strain>
    </source>
</reference>
<reference key="4">
    <citation type="journal article" date="2013" name="Rice">
        <title>Improvement of the Oryza sativa Nipponbare reference genome using next generation sequence and optical map data.</title>
        <authorList>
            <person name="Kawahara Y."/>
            <person name="de la Bastide M."/>
            <person name="Hamilton J.P."/>
            <person name="Kanamori H."/>
            <person name="McCombie W.R."/>
            <person name="Ouyang S."/>
            <person name="Schwartz D.C."/>
            <person name="Tanaka T."/>
            <person name="Wu J."/>
            <person name="Zhou S."/>
            <person name="Childs K.L."/>
            <person name="Davidson R.M."/>
            <person name="Lin H."/>
            <person name="Quesada-Ocampo L."/>
            <person name="Vaillancourt B."/>
            <person name="Sakai H."/>
            <person name="Lee S.S."/>
            <person name="Kim J."/>
            <person name="Numa H."/>
            <person name="Itoh T."/>
            <person name="Buell C.R."/>
            <person name="Matsumoto T."/>
        </authorList>
    </citation>
    <scope>GENOME REANNOTATION</scope>
    <source>
        <strain>cv. Nipponbare</strain>
    </source>
</reference>
<reference key="5">
    <citation type="journal article" date="2005" name="PLoS Biol.">
        <title>The genomes of Oryza sativa: a history of duplications.</title>
        <authorList>
            <person name="Yu J."/>
            <person name="Wang J."/>
            <person name="Lin W."/>
            <person name="Li S."/>
            <person name="Li H."/>
            <person name="Zhou J."/>
            <person name="Ni P."/>
            <person name="Dong W."/>
            <person name="Hu S."/>
            <person name="Zeng C."/>
            <person name="Zhang J."/>
            <person name="Zhang Y."/>
            <person name="Li R."/>
            <person name="Xu Z."/>
            <person name="Li S."/>
            <person name="Li X."/>
            <person name="Zheng H."/>
            <person name="Cong L."/>
            <person name="Lin L."/>
            <person name="Yin J."/>
            <person name="Geng J."/>
            <person name="Li G."/>
            <person name="Shi J."/>
            <person name="Liu J."/>
            <person name="Lv H."/>
            <person name="Li J."/>
            <person name="Wang J."/>
            <person name="Deng Y."/>
            <person name="Ran L."/>
            <person name="Shi X."/>
            <person name="Wang X."/>
            <person name="Wu Q."/>
            <person name="Li C."/>
            <person name="Ren X."/>
            <person name="Wang J."/>
            <person name="Wang X."/>
            <person name="Li D."/>
            <person name="Liu D."/>
            <person name="Zhang X."/>
            <person name="Ji Z."/>
            <person name="Zhao W."/>
            <person name="Sun Y."/>
            <person name="Zhang Z."/>
            <person name="Bao J."/>
            <person name="Han Y."/>
            <person name="Dong L."/>
            <person name="Ji J."/>
            <person name="Chen P."/>
            <person name="Wu S."/>
            <person name="Liu J."/>
            <person name="Xiao Y."/>
            <person name="Bu D."/>
            <person name="Tan J."/>
            <person name="Yang L."/>
            <person name="Ye C."/>
            <person name="Zhang J."/>
            <person name="Xu J."/>
            <person name="Zhou Y."/>
            <person name="Yu Y."/>
            <person name="Zhang B."/>
            <person name="Zhuang S."/>
            <person name="Wei H."/>
            <person name="Liu B."/>
            <person name="Lei M."/>
            <person name="Yu H."/>
            <person name="Li Y."/>
            <person name="Xu H."/>
            <person name="Wei S."/>
            <person name="He X."/>
            <person name="Fang L."/>
            <person name="Zhang Z."/>
            <person name="Zhang Y."/>
            <person name="Huang X."/>
            <person name="Su Z."/>
            <person name="Tong W."/>
            <person name="Li J."/>
            <person name="Tong Z."/>
            <person name="Li S."/>
            <person name="Ye J."/>
            <person name="Wang L."/>
            <person name="Fang L."/>
            <person name="Lei T."/>
            <person name="Chen C.-S."/>
            <person name="Chen H.-C."/>
            <person name="Xu Z."/>
            <person name="Li H."/>
            <person name="Huang H."/>
            <person name="Zhang F."/>
            <person name="Xu H."/>
            <person name="Li N."/>
            <person name="Zhao C."/>
            <person name="Li S."/>
            <person name="Dong L."/>
            <person name="Huang Y."/>
            <person name="Li L."/>
            <person name="Xi Y."/>
            <person name="Qi Q."/>
            <person name="Li W."/>
            <person name="Zhang B."/>
            <person name="Hu W."/>
            <person name="Zhang Y."/>
            <person name="Tian X."/>
            <person name="Jiao Y."/>
            <person name="Liang X."/>
            <person name="Jin J."/>
            <person name="Gao L."/>
            <person name="Zheng W."/>
            <person name="Hao B."/>
            <person name="Liu S.-M."/>
            <person name="Wang W."/>
            <person name="Yuan L."/>
            <person name="Cao M."/>
            <person name="McDermott J."/>
            <person name="Samudrala R."/>
            <person name="Wang J."/>
            <person name="Wong G.K.-S."/>
            <person name="Yang H."/>
        </authorList>
    </citation>
    <scope>NUCLEOTIDE SEQUENCE [LARGE SCALE GENOMIC DNA]</scope>
    <source>
        <strain>cv. Nipponbare</strain>
    </source>
</reference>
<protein>
    <recommendedName>
        <fullName>Putative germin-like protein 3-2</fullName>
    </recommendedName>
</protein>
<proteinExistence type="inferred from homology"/>
<dbReference type="EMBL" id="AC138001">
    <property type="protein sequence ID" value="AAP68412.1"/>
    <property type="molecule type" value="Genomic_DNA"/>
</dbReference>
<dbReference type="EMBL" id="AC145381">
    <property type="protein sequence ID" value="AAX95539.1"/>
    <property type="molecule type" value="Genomic_DNA"/>
</dbReference>
<dbReference type="EMBL" id="DP000009">
    <property type="protein sequence ID" value="ABF97927.1"/>
    <property type="molecule type" value="Genomic_DNA"/>
</dbReference>
<dbReference type="EMBL" id="AP008209">
    <property type="protein sequence ID" value="BAF12707.1"/>
    <property type="molecule type" value="Genomic_DNA"/>
</dbReference>
<dbReference type="EMBL" id="AP014959">
    <property type="protein sequence ID" value="BAS85523.1"/>
    <property type="molecule type" value="Genomic_DNA"/>
</dbReference>
<dbReference type="EMBL" id="CM000140">
    <property type="protein sequence ID" value="EAZ27969.1"/>
    <property type="molecule type" value="Genomic_DNA"/>
</dbReference>
<dbReference type="RefSeq" id="XP_015630224.1">
    <property type="nucleotide sequence ID" value="XM_015774738.1"/>
</dbReference>
<dbReference type="SMR" id="Q7XZY1"/>
<dbReference type="FunCoup" id="Q7XZY1">
    <property type="interactions" value="37"/>
</dbReference>
<dbReference type="STRING" id="39947.Q7XZY1"/>
<dbReference type="PaxDb" id="39947-Q7XZY1"/>
<dbReference type="EnsemblPlants" id="Os03t0651800-00">
    <property type="protein sequence ID" value="Os03t0651800-00"/>
    <property type="gene ID" value="Os03g0651800"/>
</dbReference>
<dbReference type="Gramene" id="Os03t0651800-00">
    <property type="protein sequence ID" value="Os03t0651800-00"/>
    <property type="gene ID" value="Os03g0651800"/>
</dbReference>
<dbReference type="KEGG" id="dosa:Os03g0651800"/>
<dbReference type="eggNOG" id="ENOG502QQ4A">
    <property type="taxonomic scope" value="Eukaryota"/>
</dbReference>
<dbReference type="HOGENOM" id="CLU_015790_0_3_1"/>
<dbReference type="InParanoid" id="Q7XZY1"/>
<dbReference type="OMA" id="ARTFQIG"/>
<dbReference type="OrthoDB" id="1921208at2759"/>
<dbReference type="Proteomes" id="UP000000763">
    <property type="component" value="Chromosome 3"/>
</dbReference>
<dbReference type="Proteomes" id="UP000007752">
    <property type="component" value="Chromosome 3"/>
</dbReference>
<dbReference type="Proteomes" id="UP000059680">
    <property type="component" value="Chromosome 3"/>
</dbReference>
<dbReference type="GO" id="GO:0048046">
    <property type="term" value="C:apoplast"/>
    <property type="evidence" value="ECO:0007669"/>
    <property type="project" value="UniProtKB-SubCell"/>
</dbReference>
<dbReference type="GO" id="GO:0009506">
    <property type="term" value="C:plasmodesma"/>
    <property type="evidence" value="ECO:0000318"/>
    <property type="project" value="GO_Central"/>
</dbReference>
<dbReference type="GO" id="GO:0030145">
    <property type="term" value="F:manganese ion binding"/>
    <property type="evidence" value="ECO:0007669"/>
    <property type="project" value="InterPro"/>
</dbReference>
<dbReference type="GO" id="GO:0010497">
    <property type="term" value="P:plasmodesmata-mediated intercellular transport"/>
    <property type="evidence" value="ECO:0000318"/>
    <property type="project" value="GO_Central"/>
</dbReference>
<dbReference type="GO" id="GO:2000280">
    <property type="term" value="P:regulation of root development"/>
    <property type="evidence" value="ECO:0000318"/>
    <property type="project" value="GO_Central"/>
</dbReference>
<dbReference type="CDD" id="cd02241">
    <property type="entry name" value="cupin_OxOx"/>
    <property type="match status" value="1"/>
</dbReference>
<dbReference type="FunFam" id="2.60.120.10:FF:000025">
    <property type="entry name" value="germin-like protein subfamily 2 member 1"/>
    <property type="match status" value="1"/>
</dbReference>
<dbReference type="Gene3D" id="2.60.120.10">
    <property type="entry name" value="Jelly Rolls"/>
    <property type="match status" value="1"/>
</dbReference>
<dbReference type="InterPro" id="IPR006045">
    <property type="entry name" value="Cupin_1"/>
</dbReference>
<dbReference type="InterPro" id="IPR001929">
    <property type="entry name" value="Germin"/>
</dbReference>
<dbReference type="InterPro" id="IPR019780">
    <property type="entry name" value="Germin_Mn-BS"/>
</dbReference>
<dbReference type="InterPro" id="IPR014710">
    <property type="entry name" value="RmlC-like_jellyroll"/>
</dbReference>
<dbReference type="InterPro" id="IPR011051">
    <property type="entry name" value="RmlC_Cupin_sf"/>
</dbReference>
<dbReference type="PANTHER" id="PTHR31238">
    <property type="entry name" value="GERMIN-LIKE PROTEIN SUBFAMILY 3 MEMBER 3"/>
    <property type="match status" value="1"/>
</dbReference>
<dbReference type="Pfam" id="PF00190">
    <property type="entry name" value="Cupin_1"/>
    <property type="match status" value="1"/>
</dbReference>
<dbReference type="PRINTS" id="PR00325">
    <property type="entry name" value="GERMIN"/>
</dbReference>
<dbReference type="SMART" id="SM00835">
    <property type="entry name" value="Cupin_1"/>
    <property type="match status" value="1"/>
</dbReference>
<dbReference type="SUPFAM" id="SSF51182">
    <property type="entry name" value="RmlC-like cupins"/>
    <property type="match status" value="1"/>
</dbReference>
<dbReference type="PROSITE" id="PS00725">
    <property type="entry name" value="GERMIN"/>
    <property type="match status" value="1"/>
</dbReference>
<evidence type="ECO:0000250" key="1"/>
<evidence type="ECO:0000255" key="2"/>
<evidence type="ECO:0000305" key="3"/>
<name>GL32_ORYSJ</name>
<accession>Q7XZY1</accession>
<accession>A0A0P0W0T7</accession>
<gene>
    <name type="ordered locus">Os03g0651800</name>
    <name type="ordered locus">LOC_Os03g44880</name>
    <name type="ORF">OsJ_011452</name>
    <name type="ORF">OSJNBa0093M23.10</name>
</gene>
<sequence length="222" mass="23552">MAKLILATFAVVFLALAATSLAGDPDMLQDVCVADYKSLRGPLRLNGIPCKRLENVTANDFFFDGLTNAGNTTNAVGSLVTAASVERLPGLNTMGVSMARIDYAPWGLSPPHTHPRATEIMFVAEGTLDVGFVTTANKLFTRTVSKGEVFVFPRGLVHFQRNSGNTSALAIAAFNSQLPGTQSIADTLFGAAPPLPSDTLARAFQVDGGMVESIKSKFPPKY</sequence>
<organism>
    <name type="scientific">Oryza sativa subsp. japonica</name>
    <name type="common">Rice</name>
    <dbReference type="NCBI Taxonomy" id="39947"/>
    <lineage>
        <taxon>Eukaryota</taxon>
        <taxon>Viridiplantae</taxon>
        <taxon>Streptophyta</taxon>
        <taxon>Embryophyta</taxon>
        <taxon>Tracheophyta</taxon>
        <taxon>Spermatophyta</taxon>
        <taxon>Magnoliopsida</taxon>
        <taxon>Liliopsida</taxon>
        <taxon>Poales</taxon>
        <taxon>Poaceae</taxon>
        <taxon>BOP clade</taxon>
        <taxon>Oryzoideae</taxon>
        <taxon>Oryzeae</taxon>
        <taxon>Oryzinae</taxon>
        <taxon>Oryza</taxon>
        <taxon>Oryza sativa</taxon>
    </lineage>
</organism>
<keyword id="KW-0052">Apoplast</keyword>
<keyword id="KW-1015">Disulfide bond</keyword>
<keyword id="KW-0325">Glycoprotein</keyword>
<keyword id="KW-0464">Manganese</keyword>
<keyword id="KW-0479">Metal-binding</keyword>
<keyword id="KW-1185">Reference proteome</keyword>
<keyword id="KW-0964">Secreted</keyword>
<keyword id="KW-0732">Signal</keyword>
<feature type="signal peptide" evidence="2">
    <location>
        <begin position="1"/>
        <end position="22"/>
    </location>
</feature>
<feature type="chain" id="PRO_0000365503" description="Putative germin-like protein 3-2">
    <location>
        <begin position="23"/>
        <end position="222"/>
    </location>
</feature>
<feature type="domain" description="Cupin type-1" evidence="2">
    <location>
        <begin position="64"/>
        <end position="212"/>
    </location>
</feature>
<feature type="binding site" evidence="1">
    <location>
        <position position="112"/>
    </location>
    <ligand>
        <name>Mn(2+)</name>
        <dbReference type="ChEBI" id="CHEBI:29035"/>
    </ligand>
</feature>
<feature type="binding site" evidence="1">
    <location>
        <position position="114"/>
    </location>
    <ligand>
        <name>Mn(2+)</name>
        <dbReference type="ChEBI" id="CHEBI:29035"/>
    </ligand>
</feature>
<feature type="binding site" evidence="1">
    <location>
        <position position="119"/>
    </location>
    <ligand>
        <name>Mn(2+)</name>
        <dbReference type="ChEBI" id="CHEBI:29035"/>
    </ligand>
</feature>
<feature type="binding site" evidence="1">
    <location>
        <position position="158"/>
    </location>
    <ligand>
        <name>Mn(2+)</name>
        <dbReference type="ChEBI" id="CHEBI:29035"/>
    </ligand>
</feature>
<feature type="glycosylation site" description="N-linked (GlcNAc...) asparagine" evidence="2">
    <location>
        <position position="55"/>
    </location>
</feature>
<feature type="glycosylation site" description="N-linked (GlcNAc...) asparagine" evidence="2">
    <location>
        <position position="71"/>
    </location>
</feature>
<feature type="glycosylation site" description="N-linked (GlcNAc...) asparagine" evidence="2">
    <location>
        <position position="165"/>
    </location>
</feature>
<feature type="disulfide bond" evidence="1">
    <location>
        <begin position="32"/>
        <end position="50"/>
    </location>
</feature>